<gene>
    <name evidence="1" type="primary">metAA</name>
    <name type="ordered locus">BT_2413</name>
</gene>
<reference key="1">
    <citation type="journal article" date="2003" name="Science">
        <title>A genomic view of the human-Bacteroides thetaiotaomicron symbiosis.</title>
        <authorList>
            <person name="Xu J."/>
            <person name="Bjursell M.K."/>
            <person name="Himrod J."/>
            <person name="Deng S."/>
            <person name="Carmichael L.K."/>
            <person name="Chiang H.C."/>
            <person name="Hooper L.V."/>
            <person name="Gordon J.I."/>
        </authorList>
    </citation>
    <scope>NUCLEOTIDE SEQUENCE [LARGE SCALE GENOMIC DNA]</scope>
    <source>
        <strain>ATCC 29148 / DSM 2079 / JCM 5827 / CCUG 10774 / NCTC 10582 / VPI-5482 / E50</strain>
    </source>
</reference>
<accession>Q8A531</accession>
<protein>
    <recommendedName>
        <fullName evidence="1">Homoserine O-acetyltransferase</fullName>
        <shortName evidence="1">HAT</shortName>
        <ecNumber evidence="1">2.3.1.31</ecNumber>
    </recommendedName>
    <alternativeName>
        <fullName evidence="1">Homoserine transacetylase</fullName>
        <shortName evidence="1">HTA</shortName>
    </alternativeName>
</protein>
<proteinExistence type="inferred from homology"/>
<name>METAA_BACTN</name>
<feature type="chain" id="PRO_0000199742" description="Homoserine O-acetyltransferase">
    <location>
        <begin position="1"/>
        <end position="305"/>
    </location>
</feature>
<feature type="active site" description="Acyl-thioester intermediate" evidence="1">
    <location>
        <position position="142"/>
    </location>
</feature>
<feature type="active site" description="Proton acceptor" evidence="1">
    <location>
        <position position="235"/>
    </location>
</feature>
<feature type="active site" evidence="1">
    <location>
        <position position="237"/>
    </location>
</feature>
<feature type="binding site" evidence="1">
    <location>
        <position position="163"/>
    </location>
    <ligand>
        <name>substrate</name>
    </ligand>
</feature>
<feature type="binding site" evidence="1">
    <location>
        <position position="192"/>
    </location>
    <ligand>
        <name>substrate</name>
    </ligand>
</feature>
<feature type="binding site" evidence="1">
    <location>
        <position position="249"/>
    </location>
    <ligand>
        <name>substrate</name>
    </ligand>
</feature>
<feature type="site" description="Important for acyl-CoA specificity" evidence="1">
    <location>
        <position position="111"/>
    </location>
</feature>
<feature type="site" description="Important for substrate specificity" evidence="1">
    <location>
        <position position="192"/>
    </location>
</feature>
<evidence type="ECO:0000255" key="1">
    <source>
        <dbReference type="HAMAP-Rule" id="MF_00295"/>
    </source>
</evidence>
<comment type="function">
    <text evidence="1">Transfers an acetyl group from acetyl-CoA to L-homoserine, forming acetyl-L-homoserine.</text>
</comment>
<comment type="catalytic activity">
    <reaction evidence="1">
        <text>L-homoserine + acetyl-CoA = O-acetyl-L-homoserine + CoA</text>
        <dbReference type="Rhea" id="RHEA:13701"/>
        <dbReference type="ChEBI" id="CHEBI:57287"/>
        <dbReference type="ChEBI" id="CHEBI:57288"/>
        <dbReference type="ChEBI" id="CHEBI:57476"/>
        <dbReference type="ChEBI" id="CHEBI:57716"/>
        <dbReference type="EC" id="2.3.1.31"/>
    </reaction>
</comment>
<comment type="pathway">
    <text evidence="1">Amino-acid biosynthesis; L-methionine biosynthesis via de novo pathway; O-acetyl-L-homoserine from L-homoserine: step 1/1.</text>
</comment>
<comment type="subcellular location">
    <subcellularLocation>
        <location evidence="1">Cytoplasm</location>
    </subcellularLocation>
</comment>
<comment type="similarity">
    <text evidence="1">Belongs to the MetA family.</text>
</comment>
<dbReference type="EC" id="2.3.1.31" evidence="1"/>
<dbReference type="EMBL" id="AE015928">
    <property type="protein sequence ID" value="AAO77520.1"/>
    <property type="molecule type" value="Genomic_DNA"/>
</dbReference>
<dbReference type="RefSeq" id="NP_811326.1">
    <property type="nucleotide sequence ID" value="NC_004663.1"/>
</dbReference>
<dbReference type="RefSeq" id="WP_008764097.1">
    <property type="nucleotide sequence ID" value="NC_004663.1"/>
</dbReference>
<dbReference type="SMR" id="Q8A531"/>
<dbReference type="FunCoup" id="Q8A531">
    <property type="interactions" value="113"/>
</dbReference>
<dbReference type="STRING" id="226186.BT_2413"/>
<dbReference type="PaxDb" id="226186-BT_2413"/>
<dbReference type="EnsemblBacteria" id="AAO77520">
    <property type="protein sequence ID" value="AAO77520"/>
    <property type="gene ID" value="BT_2413"/>
</dbReference>
<dbReference type="GeneID" id="60923583"/>
<dbReference type="KEGG" id="bth:BT_2413"/>
<dbReference type="PATRIC" id="fig|226186.12.peg.2474"/>
<dbReference type="eggNOG" id="COG1897">
    <property type="taxonomic scope" value="Bacteria"/>
</dbReference>
<dbReference type="HOGENOM" id="CLU_057851_0_1_10"/>
<dbReference type="InParanoid" id="Q8A531"/>
<dbReference type="OrthoDB" id="9772423at2"/>
<dbReference type="UniPathway" id="UPA00051">
    <property type="reaction ID" value="UER00074"/>
</dbReference>
<dbReference type="Proteomes" id="UP000001414">
    <property type="component" value="Chromosome"/>
</dbReference>
<dbReference type="GO" id="GO:0005737">
    <property type="term" value="C:cytoplasm"/>
    <property type="evidence" value="ECO:0007669"/>
    <property type="project" value="UniProtKB-SubCell"/>
</dbReference>
<dbReference type="GO" id="GO:0004414">
    <property type="term" value="F:homoserine O-acetyltransferase activity"/>
    <property type="evidence" value="ECO:0007669"/>
    <property type="project" value="UniProtKB-EC"/>
</dbReference>
<dbReference type="GO" id="GO:0008899">
    <property type="term" value="F:homoserine O-succinyltransferase activity"/>
    <property type="evidence" value="ECO:0000318"/>
    <property type="project" value="GO_Central"/>
</dbReference>
<dbReference type="GO" id="GO:0019281">
    <property type="term" value="P:L-methionine biosynthetic process from homoserine via O-succinyl-L-homoserine and cystathionine"/>
    <property type="evidence" value="ECO:0007669"/>
    <property type="project" value="InterPro"/>
</dbReference>
<dbReference type="CDD" id="cd03131">
    <property type="entry name" value="GATase1_HTS"/>
    <property type="match status" value="1"/>
</dbReference>
<dbReference type="FunFam" id="3.40.50.880:FF:000004">
    <property type="entry name" value="Homoserine O-succinyltransferase"/>
    <property type="match status" value="1"/>
</dbReference>
<dbReference type="Gene3D" id="3.40.50.880">
    <property type="match status" value="1"/>
</dbReference>
<dbReference type="HAMAP" id="MF_00295">
    <property type="entry name" value="MetA_acyltransf"/>
    <property type="match status" value="1"/>
</dbReference>
<dbReference type="InterPro" id="IPR029062">
    <property type="entry name" value="Class_I_gatase-like"/>
</dbReference>
<dbReference type="InterPro" id="IPR005697">
    <property type="entry name" value="HST_MetA"/>
</dbReference>
<dbReference type="InterPro" id="IPR033752">
    <property type="entry name" value="MetA_family"/>
</dbReference>
<dbReference type="NCBIfam" id="TIGR01001">
    <property type="entry name" value="metA"/>
    <property type="match status" value="1"/>
</dbReference>
<dbReference type="PANTHER" id="PTHR20919">
    <property type="entry name" value="HOMOSERINE O-SUCCINYLTRANSFERASE"/>
    <property type="match status" value="1"/>
</dbReference>
<dbReference type="PANTHER" id="PTHR20919:SF0">
    <property type="entry name" value="HOMOSERINE O-SUCCINYLTRANSFERASE"/>
    <property type="match status" value="1"/>
</dbReference>
<dbReference type="Pfam" id="PF04204">
    <property type="entry name" value="HTS"/>
    <property type="match status" value="1"/>
</dbReference>
<dbReference type="PIRSF" id="PIRSF000450">
    <property type="entry name" value="H_ser_succinyltr"/>
    <property type="match status" value="1"/>
</dbReference>
<dbReference type="SUPFAM" id="SSF52317">
    <property type="entry name" value="Class I glutamine amidotransferase-like"/>
    <property type="match status" value="1"/>
</dbReference>
<sequence length="305" mass="35903">MPLNLPDKLPAIELLKEENIFVIDTSRATQQDIRPLRIVILNLMPLKITTETDLVRLLSNTPLQVEISFMKIKSHTSKNTPIEHMQTFYTDFEQMRNEKYDGMIITGAPVEQMDFEEVTYWEEITEIFDWARTHVTSTLYICWAAQAGLYHHYGVPKYPLDQKMFGIFEHRVLEPFHSIFRGFDDCFYVPHSRHTEVRREDILKVPELTLLSESKDAGVYMAMARGGREFFVTGHSEYSPYTLDTEYRRDLGKGLPIEIPRNYYVDDDPDKGPLVRWRAHANLLFSNWLNYFVYQETPYNINDIE</sequence>
<keyword id="KW-0012">Acyltransferase</keyword>
<keyword id="KW-0028">Amino-acid biosynthesis</keyword>
<keyword id="KW-0963">Cytoplasm</keyword>
<keyword id="KW-0486">Methionine biosynthesis</keyword>
<keyword id="KW-1185">Reference proteome</keyword>
<keyword id="KW-0808">Transferase</keyword>
<organism>
    <name type="scientific">Bacteroides thetaiotaomicron (strain ATCC 29148 / DSM 2079 / JCM 5827 / CCUG 10774 / NCTC 10582 / VPI-5482 / E50)</name>
    <dbReference type="NCBI Taxonomy" id="226186"/>
    <lineage>
        <taxon>Bacteria</taxon>
        <taxon>Pseudomonadati</taxon>
        <taxon>Bacteroidota</taxon>
        <taxon>Bacteroidia</taxon>
        <taxon>Bacteroidales</taxon>
        <taxon>Bacteroidaceae</taxon>
        <taxon>Bacteroides</taxon>
    </lineage>
</organism>